<organism>
    <name type="scientific">Wolinella succinogenes (strain ATCC 29543 / DSM 1740 / CCUG 13145 / JCM 31913 / LMG 7466 / NCTC 11488 / FDC 602W)</name>
    <name type="common">Vibrio succinogenes</name>
    <dbReference type="NCBI Taxonomy" id="273121"/>
    <lineage>
        <taxon>Bacteria</taxon>
        <taxon>Pseudomonadati</taxon>
        <taxon>Campylobacterota</taxon>
        <taxon>Epsilonproteobacteria</taxon>
        <taxon>Campylobacterales</taxon>
        <taxon>Helicobacteraceae</taxon>
        <taxon>Wolinella</taxon>
    </lineage>
</organism>
<gene>
    <name evidence="1" type="primary">proB</name>
    <name type="ordered locus">WS0506</name>
</gene>
<keyword id="KW-0028">Amino-acid biosynthesis</keyword>
<keyword id="KW-0067">ATP-binding</keyword>
<keyword id="KW-0963">Cytoplasm</keyword>
<keyword id="KW-0418">Kinase</keyword>
<keyword id="KW-0547">Nucleotide-binding</keyword>
<keyword id="KW-0641">Proline biosynthesis</keyword>
<keyword id="KW-1185">Reference proteome</keyword>
<keyword id="KW-0808">Transferase</keyword>
<evidence type="ECO:0000255" key="1">
    <source>
        <dbReference type="HAMAP-Rule" id="MF_00456"/>
    </source>
</evidence>
<comment type="function">
    <text evidence="1">Catalyzes the transfer of a phosphate group to glutamate to form L-glutamate 5-phosphate.</text>
</comment>
<comment type="catalytic activity">
    <reaction evidence="1">
        <text>L-glutamate + ATP = L-glutamyl 5-phosphate + ADP</text>
        <dbReference type="Rhea" id="RHEA:14877"/>
        <dbReference type="ChEBI" id="CHEBI:29985"/>
        <dbReference type="ChEBI" id="CHEBI:30616"/>
        <dbReference type="ChEBI" id="CHEBI:58274"/>
        <dbReference type="ChEBI" id="CHEBI:456216"/>
        <dbReference type="EC" id="2.7.2.11"/>
    </reaction>
</comment>
<comment type="pathway">
    <text evidence="1">Amino-acid biosynthesis; L-proline biosynthesis; L-glutamate 5-semialdehyde from L-glutamate: step 1/2.</text>
</comment>
<comment type="subcellular location">
    <subcellularLocation>
        <location evidence="1">Cytoplasm</location>
    </subcellularLocation>
</comment>
<comment type="similarity">
    <text evidence="1">Belongs to the glutamate 5-kinase family.</text>
</comment>
<dbReference type="EC" id="2.7.2.11" evidence="1"/>
<dbReference type="EMBL" id="BX571658">
    <property type="protein sequence ID" value="CAE09643.1"/>
    <property type="molecule type" value="Genomic_DNA"/>
</dbReference>
<dbReference type="RefSeq" id="WP_011138443.1">
    <property type="nucleotide sequence ID" value="NC_005090.1"/>
</dbReference>
<dbReference type="SMR" id="Q7MA27"/>
<dbReference type="STRING" id="273121.WS0506"/>
<dbReference type="KEGG" id="wsu:WS0506"/>
<dbReference type="eggNOG" id="COG0263">
    <property type="taxonomic scope" value="Bacteria"/>
</dbReference>
<dbReference type="HOGENOM" id="CLU_025400_0_0_7"/>
<dbReference type="UniPathway" id="UPA00098">
    <property type="reaction ID" value="UER00359"/>
</dbReference>
<dbReference type="Proteomes" id="UP000000422">
    <property type="component" value="Chromosome"/>
</dbReference>
<dbReference type="GO" id="GO:0005829">
    <property type="term" value="C:cytosol"/>
    <property type="evidence" value="ECO:0007669"/>
    <property type="project" value="TreeGrafter"/>
</dbReference>
<dbReference type="GO" id="GO:0005524">
    <property type="term" value="F:ATP binding"/>
    <property type="evidence" value="ECO:0007669"/>
    <property type="project" value="UniProtKB-KW"/>
</dbReference>
<dbReference type="GO" id="GO:0004349">
    <property type="term" value="F:glutamate 5-kinase activity"/>
    <property type="evidence" value="ECO:0007669"/>
    <property type="project" value="UniProtKB-UniRule"/>
</dbReference>
<dbReference type="GO" id="GO:0055129">
    <property type="term" value="P:L-proline biosynthetic process"/>
    <property type="evidence" value="ECO:0007669"/>
    <property type="project" value="UniProtKB-UniRule"/>
</dbReference>
<dbReference type="CDD" id="cd04242">
    <property type="entry name" value="AAK_G5K_ProB"/>
    <property type="match status" value="1"/>
</dbReference>
<dbReference type="FunFam" id="3.40.1160.10:FF:000006">
    <property type="entry name" value="Glutamate 5-kinase"/>
    <property type="match status" value="1"/>
</dbReference>
<dbReference type="Gene3D" id="3.40.1160.10">
    <property type="entry name" value="Acetylglutamate kinase-like"/>
    <property type="match status" value="1"/>
</dbReference>
<dbReference type="HAMAP" id="MF_00456">
    <property type="entry name" value="ProB"/>
    <property type="match status" value="1"/>
</dbReference>
<dbReference type="InterPro" id="IPR036393">
    <property type="entry name" value="AceGlu_kinase-like_sf"/>
</dbReference>
<dbReference type="InterPro" id="IPR001048">
    <property type="entry name" value="Asp/Glu/Uridylate_kinase"/>
</dbReference>
<dbReference type="InterPro" id="IPR041739">
    <property type="entry name" value="G5K_ProB"/>
</dbReference>
<dbReference type="InterPro" id="IPR001057">
    <property type="entry name" value="Glu/AcGlu_kinase"/>
</dbReference>
<dbReference type="InterPro" id="IPR011529">
    <property type="entry name" value="Glu_5kinase"/>
</dbReference>
<dbReference type="InterPro" id="IPR005715">
    <property type="entry name" value="Glu_5kinase/COase_Synthase"/>
</dbReference>
<dbReference type="InterPro" id="IPR019797">
    <property type="entry name" value="Glutamate_5-kinase_CS"/>
</dbReference>
<dbReference type="NCBIfam" id="TIGR01027">
    <property type="entry name" value="proB"/>
    <property type="match status" value="1"/>
</dbReference>
<dbReference type="PANTHER" id="PTHR43654">
    <property type="entry name" value="GLUTAMATE 5-KINASE"/>
    <property type="match status" value="1"/>
</dbReference>
<dbReference type="PANTHER" id="PTHR43654:SF3">
    <property type="entry name" value="GLUTAMATE 5-KINASE"/>
    <property type="match status" value="1"/>
</dbReference>
<dbReference type="Pfam" id="PF00696">
    <property type="entry name" value="AA_kinase"/>
    <property type="match status" value="1"/>
</dbReference>
<dbReference type="PIRSF" id="PIRSF000729">
    <property type="entry name" value="GK"/>
    <property type="match status" value="1"/>
</dbReference>
<dbReference type="PRINTS" id="PR00474">
    <property type="entry name" value="GLU5KINASE"/>
</dbReference>
<dbReference type="SUPFAM" id="SSF53633">
    <property type="entry name" value="Carbamate kinase-like"/>
    <property type="match status" value="1"/>
</dbReference>
<dbReference type="PROSITE" id="PS00902">
    <property type="entry name" value="GLUTAMATE_5_KINASE"/>
    <property type="match status" value="1"/>
</dbReference>
<proteinExistence type="inferred from homology"/>
<reference key="1">
    <citation type="journal article" date="2003" name="Proc. Natl. Acad. Sci. U.S.A.">
        <title>Complete genome sequence and analysis of Wolinella succinogenes.</title>
        <authorList>
            <person name="Baar C."/>
            <person name="Eppinger M."/>
            <person name="Raddatz G."/>
            <person name="Simon J."/>
            <person name="Lanz C."/>
            <person name="Klimmek O."/>
            <person name="Nandakumar R."/>
            <person name="Gross R."/>
            <person name="Rosinus A."/>
            <person name="Keller H."/>
            <person name="Jagtap P."/>
            <person name="Linke B."/>
            <person name="Meyer F."/>
            <person name="Lederer H."/>
            <person name="Schuster S.C."/>
        </authorList>
    </citation>
    <scope>NUCLEOTIDE SEQUENCE [LARGE SCALE GENOMIC DNA]</scope>
    <source>
        <strain>ATCC 29543 / DSM 1740 / CCUG 13145 / JCM 31913 / LMG 7466 / NCTC 11488 / FDC 602W</strain>
    </source>
</reference>
<sequence length="261" mass="28707">MRRIVIKVGSALLSRGHEMAMDRMESLCRFIAELKQKGDEVILVTSAAVAAGYTALALDKRQLPNRQALAAIGQPLLMNLYHQTLAPLGILPAQMLLSAYDFDSRKRTENARNTIEVLLSHGVLPIINENDAVATKELDMLAVFGDNDRLSAHVAHYFSAEILLILSDIDGYYDKNPCEFPDAKIRRVVNFLTPEELEAEVSPNNAFATGGIVTKLQAADFLMKRGQKMFLANGFNLGDARSFLLEGIHCQGTLFVQGGES</sequence>
<protein>
    <recommendedName>
        <fullName evidence="1">Glutamate 5-kinase</fullName>
        <ecNumber evidence="1">2.7.2.11</ecNumber>
    </recommendedName>
    <alternativeName>
        <fullName evidence="1">Gamma-glutamyl kinase</fullName>
        <shortName evidence="1">GK</shortName>
    </alternativeName>
</protein>
<accession>Q7MA27</accession>
<feature type="chain" id="PRO_0000109756" description="Glutamate 5-kinase">
    <location>
        <begin position="1"/>
        <end position="261"/>
    </location>
</feature>
<feature type="binding site" evidence="1">
    <location>
        <position position="7"/>
    </location>
    <ligand>
        <name>ATP</name>
        <dbReference type="ChEBI" id="CHEBI:30616"/>
    </ligand>
</feature>
<feature type="binding site" evidence="1">
    <location>
        <position position="46"/>
    </location>
    <ligand>
        <name>substrate</name>
    </ligand>
</feature>
<feature type="binding site" evidence="1">
    <location>
        <position position="131"/>
    </location>
    <ligand>
        <name>substrate</name>
    </ligand>
</feature>
<feature type="binding site" evidence="1">
    <location>
        <position position="147"/>
    </location>
    <ligand>
        <name>substrate</name>
    </ligand>
</feature>
<feature type="binding site" evidence="1">
    <location>
        <begin position="167"/>
        <end position="168"/>
    </location>
    <ligand>
        <name>ATP</name>
        <dbReference type="ChEBI" id="CHEBI:30616"/>
    </ligand>
</feature>
<feature type="binding site" evidence="1">
    <location>
        <begin position="209"/>
        <end position="215"/>
    </location>
    <ligand>
        <name>ATP</name>
        <dbReference type="ChEBI" id="CHEBI:30616"/>
    </ligand>
</feature>
<name>PROB_WOLSU</name>